<comment type="function">
    <text evidence="1">More likely to influence phosphoinositide metabolism than actin assembly.</text>
</comment>
<comment type="similarity">
    <text evidence="2">Belongs to the profilin family.</text>
</comment>
<organism>
    <name type="scientific">Cowpox virus (strain GRI-90 / Grishak)</name>
    <name type="common">CPV</name>
    <dbReference type="NCBI Taxonomy" id="265871"/>
    <lineage>
        <taxon>Viruses</taxon>
        <taxon>Varidnaviria</taxon>
        <taxon>Bamfordvirae</taxon>
        <taxon>Nucleocytoviricota</taxon>
        <taxon>Pokkesviricetes</taxon>
        <taxon>Chitovirales</taxon>
        <taxon>Poxviridae</taxon>
        <taxon>Chordopoxvirinae</taxon>
        <taxon>Orthopoxvirus</taxon>
        <taxon>Cowpox virus</taxon>
    </lineage>
</organism>
<name>PROF_CWPXG</name>
<reference key="1">
    <citation type="submission" date="2003-03" db="EMBL/GenBank/DDBJ databases">
        <title>Structure-function and organization of cowpox virus strain GRI-90 complete genome.</title>
        <authorList>
            <person name="Shchelkunov S.N."/>
            <person name="Safronov P.F."/>
            <person name="Totmenin A.V."/>
            <person name="Miheev M.V."/>
            <person name="Ryazankina O.I."/>
            <person name="Petrov N.A."/>
            <person name="Gutorov V.V."/>
            <person name="Kotwal G.J."/>
            <person name="Sandakhchiev L.S."/>
        </authorList>
    </citation>
    <scope>NUCLEOTIDE SEQUENCE [LARGE SCALE GENOMIC DNA]</scope>
</reference>
<keyword id="KW-0009">Actin-binding</keyword>
<proteinExistence type="inferred from homology"/>
<sequence>MAEWHKIIEDISKNNKFEDAAIVDYKTTKNVLAAIPNRTFAKINPGEVIPLITNHNILKPLIGQKFCIVYTNSLMDENTYAMELLTGYAPVSPIVIARTHTALIFLMGKPTTSRRDVYRTCRDHATRVRATGN</sequence>
<dbReference type="EMBL" id="X94355">
    <property type="protein sequence ID" value="CAD90711.1"/>
    <property type="molecule type" value="Genomic_DNA"/>
</dbReference>
<dbReference type="SMR" id="Q80DT4"/>
<dbReference type="Proteomes" id="UP000137384">
    <property type="component" value="Segment"/>
</dbReference>
<dbReference type="GO" id="GO:0003779">
    <property type="term" value="F:actin binding"/>
    <property type="evidence" value="ECO:0007669"/>
    <property type="project" value="UniProtKB-KW"/>
</dbReference>
<dbReference type="Gene3D" id="3.30.450.30">
    <property type="entry name" value="Dynein light chain 2a, cytoplasmic"/>
    <property type="match status" value="1"/>
</dbReference>
<dbReference type="InterPro" id="IPR048278">
    <property type="entry name" value="PFN"/>
</dbReference>
<dbReference type="InterPro" id="IPR005455">
    <property type="entry name" value="PFN_euk"/>
</dbReference>
<dbReference type="InterPro" id="IPR036140">
    <property type="entry name" value="PFN_sf"/>
</dbReference>
<dbReference type="InterPro" id="IPR027310">
    <property type="entry name" value="Profilin_CS"/>
</dbReference>
<dbReference type="Pfam" id="PF00235">
    <property type="entry name" value="Profilin"/>
    <property type="match status" value="1"/>
</dbReference>
<dbReference type="SMART" id="SM00392">
    <property type="entry name" value="PROF"/>
    <property type="match status" value="1"/>
</dbReference>
<dbReference type="SUPFAM" id="SSF55770">
    <property type="entry name" value="Profilin (actin-binding protein)"/>
    <property type="match status" value="1"/>
</dbReference>
<dbReference type="PROSITE" id="PS00414">
    <property type="entry name" value="PROFILIN"/>
    <property type="match status" value="1"/>
</dbReference>
<organismHost>
    <name type="scientific">Bos taurus</name>
    <name type="common">Bovine</name>
    <dbReference type="NCBI Taxonomy" id="9913"/>
</organismHost>
<organismHost>
    <name type="scientific">Felis catus</name>
    <name type="common">Cat</name>
    <name type="synonym">Felis silvestris catus</name>
    <dbReference type="NCBI Taxonomy" id="9685"/>
</organismHost>
<organismHost>
    <name type="scientific">Homo sapiens</name>
    <name type="common">Human</name>
    <dbReference type="NCBI Taxonomy" id="9606"/>
</organismHost>
<organismHost>
    <name type="scientific">Loxodonta africana</name>
    <name type="common">African elephant</name>
    <dbReference type="NCBI Taxonomy" id="9785"/>
</organismHost>
<organismHost>
    <name type="scientific">Microtus agrestis</name>
    <name type="common">Short-tailed field vole</name>
    <dbReference type="NCBI Taxonomy" id="29092"/>
</organismHost>
<organismHost>
    <name type="scientific">Mus musculus</name>
    <name type="common">Mouse</name>
    <dbReference type="NCBI Taxonomy" id="10090"/>
</organismHost>
<organismHost>
    <name type="scientific">Myodes glareolus</name>
    <name type="common">Bank vole</name>
    <name type="synonym">Clethrionomys glareolus</name>
    <dbReference type="NCBI Taxonomy" id="447135"/>
</organismHost>
<gene>
    <name type="ORF">A44R</name>
</gene>
<evidence type="ECO:0000250" key="1"/>
<evidence type="ECO:0000305" key="2"/>
<accession>Q80DT4</accession>
<protein>
    <recommendedName>
        <fullName>Profilin</fullName>
    </recommendedName>
</protein>
<feature type="chain" id="PRO_0000199688" description="Profilin">
    <location>
        <begin position="1"/>
        <end position="133"/>
    </location>
</feature>